<accession>P9WEF8</accession>
<organism>
    <name type="scientific">Annulohypoxylon moriforme</name>
    <name type="common">Filamentous fungus</name>
    <name type="synonym">Hypoxylon moriforme</name>
    <dbReference type="NCBI Taxonomy" id="326622"/>
    <lineage>
        <taxon>Eukaryota</taxon>
        <taxon>Fungi</taxon>
        <taxon>Dikarya</taxon>
        <taxon>Ascomycota</taxon>
        <taxon>Pezizomycotina</taxon>
        <taxon>Sordariomycetes</taxon>
        <taxon>Xylariomycetidae</taxon>
        <taxon>Xylariales</taxon>
        <taxon>Hypoxylaceae</taxon>
        <taxon>Annulohypoxylon</taxon>
    </lineage>
</organism>
<protein>
    <recommendedName>
        <fullName evidence="4">Short chain dehydrogenase/reductase mfmJ</fullName>
        <ecNumber evidence="3">1.1.1.-</ecNumber>
    </recommendedName>
    <alternativeName>
        <fullName evidence="4">11'-O-desmethylfendlerol biosynthesis cluster protein J</fullName>
    </alternativeName>
</protein>
<sequence length="344" mass="37795">MVSSKELPPSTVPFFPNQFFRNQFRSKPQYPPPNTNLSEKVAIISGGNTGLGFEAATQLLSFKLGTLILAVRSTAKGEAAASKLRARYPKATIHVWKLDMSSYDSIQEFAGRVNTQLPRLDMVILNAGVSKLEFGTVSSTGHEETVQINYLSTALLAILLLPALKSKSPPGIPGRLTIVSAALTLVAKFPNRDESPLLPSFDNPKYWDPNDQYCSSKLLMHLFLWKLVDYISADDVIVNLADPGFVKGTELARDVSGGQRVGLSIFASLTGRNKKHGASTYVDAVVNKGKESHGGFIMSWQIHPYPTLLYTSEGQQITERLWDETLAEFEFANVRGIIESMKGN</sequence>
<name>MFMJ_ANNMO</name>
<reference key="1">
    <citation type="journal article" date="2022" name="New Phytol.">
        <title>Ecological generalism drives hyperdiversity of secondary metabolite gene clusters in xylarialean endophytes.</title>
        <authorList>
            <person name="Franco M.E.E."/>
            <person name="Wisecaver J.H."/>
            <person name="Arnold A.E."/>
            <person name="Ju Y.M."/>
            <person name="Slot J.C."/>
            <person name="Ahrendt S."/>
            <person name="Moore L.P."/>
            <person name="Eastman K.E."/>
            <person name="Scott K."/>
            <person name="Konkel Z."/>
            <person name="Mondo S.J."/>
            <person name="Kuo A."/>
            <person name="Hayes R.D."/>
            <person name="Haridas S."/>
            <person name="Andreopoulos B."/>
            <person name="Riley R."/>
            <person name="LaButti K."/>
            <person name="Pangilinan J."/>
            <person name="Lipzen A."/>
            <person name="Amirebrahimi M."/>
            <person name="Yan J."/>
            <person name="Adam C."/>
            <person name="Keymanesh K."/>
            <person name="Ng V."/>
            <person name="Louie K."/>
            <person name="Northen T."/>
            <person name="Drula E."/>
            <person name="Henrissat B."/>
            <person name="Hsieh H.M."/>
            <person name="Youens-Clark K."/>
            <person name="Lutzoni F."/>
            <person name="Miadlikowska J."/>
            <person name="Eastwood D.C."/>
            <person name="Hamelin R.C."/>
            <person name="Grigoriev I.V."/>
            <person name="U'Ren J.M."/>
        </authorList>
    </citation>
    <scope>NUCLEOTIDE SEQUENCE [GENOMIC DNA]</scope>
    <source>
        <strain>CBS 123579</strain>
    </source>
</reference>
<reference key="2">
    <citation type="journal article" date="2024" name="Chem. Sci.">
        <title>Global genome mining-driven discovery of an unusual biosynthetic logic for fungal polyketide-terpenoid hybrids.</title>
        <authorList>
            <person name="Yan D."/>
            <person name="Matsuda Y."/>
        </authorList>
    </citation>
    <scope>FUNCTION</scope>
    <source>
        <strain>CBS 123579</strain>
    </source>
</reference>
<evidence type="ECO:0000250" key="1">
    <source>
        <dbReference type="UniProtKB" id="L0E2Z4"/>
    </source>
</evidence>
<evidence type="ECO:0000250" key="2">
    <source>
        <dbReference type="UniProtKB" id="O93868"/>
    </source>
</evidence>
<evidence type="ECO:0000269" key="3">
    <source>
    </source>
</evidence>
<evidence type="ECO:0000303" key="4">
    <source>
    </source>
</evidence>
<evidence type="ECO:0000305" key="5"/>
<feature type="chain" id="PRO_0000461999" description="Short chain dehydrogenase/reductase mfmJ">
    <location>
        <begin position="1"/>
        <end position="344"/>
    </location>
</feature>
<feature type="active site" description="Proton donor" evidence="2">
    <location>
        <position position="213"/>
    </location>
</feature>
<feature type="active site" description="Lowers pKa of active site Tyr" evidence="2">
    <location>
        <position position="217"/>
    </location>
</feature>
<feature type="binding site" evidence="1">
    <location>
        <position position="51"/>
    </location>
    <ligand>
        <name>NADP(+)</name>
        <dbReference type="ChEBI" id="CHEBI:58349"/>
    </ligand>
</feature>
<feature type="binding site" evidence="1">
    <location>
        <position position="76"/>
    </location>
    <ligand>
        <name>NADP(+)</name>
        <dbReference type="ChEBI" id="CHEBI:58349"/>
    </ligand>
</feature>
<feature type="binding site" evidence="1">
    <location>
        <position position="99"/>
    </location>
    <ligand>
        <name>NADP(+)</name>
        <dbReference type="ChEBI" id="CHEBI:58349"/>
    </ligand>
</feature>
<feature type="binding site" evidence="2">
    <location>
        <position position="126"/>
    </location>
    <ligand>
        <name>NADP(+)</name>
        <dbReference type="ChEBI" id="CHEBI:58349"/>
    </ligand>
</feature>
<feature type="binding site" evidence="2">
    <location>
        <position position="213"/>
    </location>
    <ligand>
        <name>NADP(+)</name>
        <dbReference type="ChEBI" id="CHEBI:58349"/>
    </ligand>
</feature>
<feature type="binding site" evidence="2">
    <location>
        <position position="217"/>
    </location>
    <ligand>
        <name>NADP(+)</name>
        <dbReference type="ChEBI" id="CHEBI:58349"/>
    </ligand>
</feature>
<proteinExistence type="inferred from homology"/>
<comment type="function">
    <text evidence="3">Short chain dehydrogenase/reductase; part of the gene cluster that mediates the biosynthesis of the phthalide-terpenoid hybrid 11'-O-desmethylfendlerol (PubMed:38404388). MfmJ seems not to be involved directly in the biosynthesis of 11'-O-desmethylfendlerol and its role has still to be determined (PubMed:38404388). The biosynthesis of 11'-O-desmethylfendlerol begins with the NR-PKS mfmB that forms 3,5-dimethylorsellinic acid (DMOA), which is then transformed into the phthalide 5,7-dihydroxy-4-(hydroxymethyl)-6-methylphthalide by the cytochrome P450 monooxygenase mfmA and the hydrolase mfmC. Subsequently, the methyltransferase mfmE catalyzes 7-O-methylation to yield 5-hydroxy-4-(hydroxymethyl)-7-methoxy-6-methylphthalide, which undergoes C-3 hydroxylation by the cytochrome P450 monooxygenase mfmF. The resultant cyclopolic acid (2,5-dihydroxy-4-(hydroxymethyl)-7-methoxy-6-methylphthalide) is then farnesylated by the DMATS-type prenyltransferase mfmD to afford 5-O-farnesylcyclopolic acid. Finally, the Pyr4-family terpene cyclase mfmH cyclizes the farnesyl moiety of 5-O-farnesylcyclopolic acid into a drimane-like structure, thus completing the biosynthesis of 11'-O-desmethylfendlerol (PubMed:38404388).</text>
</comment>
<comment type="similarity">
    <text evidence="5">Belongs to the short-chain dehydrogenases/reductases (SDR) family.</text>
</comment>
<gene>
    <name evidence="4" type="primary">mfmJ</name>
    <name type="ORF">F4805DRAFT_30196</name>
</gene>
<keyword id="KW-0521">NADP</keyword>
<keyword id="KW-0560">Oxidoreductase</keyword>
<dbReference type="EC" id="1.1.1.-" evidence="3"/>
<dbReference type="EMBL" id="MU403194">
    <property type="protein sequence ID" value="KAI1452421.1"/>
    <property type="molecule type" value="Genomic_DNA"/>
</dbReference>
<dbReference type="Gene3D" id="3.40.50.720">
    <property type="entry name" value="NAD(P)-binding Rossmann-like Domain"/>
    <property type="match status" value="1"/>
</dbReference>
<dbReference type="InterPro" id="IPR036291">
    <property type="entry name" value="NAD(P)-bd_dom_sf"/>
</dbReference>
<dbReference type="InterPro" id="IPR002347">
    <property type="entry name" value="SDR_fam"/>
</dbReference>
<dbReference type="PANTHER" id="PTHR43157:SF35">
    <property type="entry name" value="DEHYDROGENASE_REDUCTASE FAMILY PROTEIN, PUTATIVE-RELATED"/>
    <property type="match status" value="1"/>
</dbReference>
<dbReference type="PANTHER" id="PTHR43157">
    <property type="entry name" value="PHOSPHATIDYLINOSITOL-GLYCAN BIOSYNTHESIS CLASS F PROTEIN-RELATED"/>
    <property type="match status" value="1"/>
</dbReference>
<dbReference type="Pfam" id="PF00106">
    <property type="entry name" value="adh_short"/>
    <property type="match status" value="1"/>
</dbReference>
<dbReference type="PRINTS" id="PR00081">
    <property type="entry name" value="GDHRDH"/>
</dbReference>
<dbReference type="SUPFAM" id="SSF51735">
    <property type="entry name" value="NAD(P)-binding Rossmann-fold domains"/>
    <property type="match status" value="1"/>
</dbReference>